<dbReference type="EMBL" id="CU571077">
    <property type="protein sequence ID" value="CAX13590.1"/>
    <property type="molecule type" value="Genomic_DNA"/>
</dbReference>
<dbReference type="EMBL" id="BC066755">
    <property type="protein sequence ID" value="AAH66755.1"/>
    <property type="molecule type" value="mRNA"/>
</dbReference>
<dbReference type="RefSeq" id="NP_999922.1">
    <property type="nucleotide sequence ID" value="NM_214757.2"/>
</dbReference>
<dbReference type="SMR" id="Q6NY34"/>
<dbReference type="FunCoup" id="Q6NY34">
    <property type="interactions" value="2519"/>
</dbReference>
<dbReference type="STRING" id="7955.ENSDARP00000064193"/>
<dbReference type="PaxDb" id="7955-ENSDARP00000064193"/>
<dbReference type="Ensembl" id="ENSDART00000064194">
    <property type="protein sequence ID" value="ENSDARP00000064193"/>
    <property type="gene ID" value="ENSDARG00000043713"/>
</dbReference>
<dbReference type="GeneID" id="792029"/>
<dbReference type="KEGG" id="dre:792029"/>
<dbReference type="AGR" id="ZFIN:ZDB-GENE-040426-2594"/>
<dbReference type="CTD" id="792029"/>
<dbReference type="ZFIN" id="ZDB-GENE-040426-2594">
    <property type="gene designation" value="asf1bb"/>
</dbReference>
<dbReference type="eggNOG" id="KOG3265">
    <property type="taxonomic scope" value="Eukaryota"/>
</dbReference>
<dbReference type="HOGENOM" id="CLU_060354_1_2_1"/>
<dbReference type="InParanoid" id="Q6NY34"/>
<dbReference type="OMA" id="FYVNNDY"/>
<dbReference type="OrthoDB" id="29755at2759"/>
<dbReference type="PhylomeDB" id="Q6NY34"/>
<dbReference type="TreeFam" id="TF106429"/>
<dbReference type="PRO" id="PR:Q6NY34"/>
<dbReference type="Proteomes" id="UP000000437">
    <property type="component" value="Chromosome 1"/>
</dbReference>
<dbReference type="Bgee" id="ENSDARG00000043713">
    <property type="expression patterns" value="Expressed in mature ovarian follicle and 27 other cell types or tissues"/>
</dbReference>
<dbReference type="GO" id="GO:0000785">
    <property type="term" value="C:chromatin"/>
    <property type="evidence" value="ECO:0000318"/>
    <property type="project" value="GO_Central"/>
</dbReference>
<dbReference type="GO" id="GO:0005634">
    <property type="term" value="C:nucleus"/>
    <property type="evidence" value="ECO:0000318"/>
    <property type="project" value="GO_Central"/>
</dbReference>
<dbReference type="GO" id="GO:0042393">
    <property type="term" value="F:histone binding"/>
    <property type="evidence" value="ECO:0000318"/>
    <property type="project" value="GO_Central"/>
</dbReference>
<dbReference type="GO" id="GO:0006335">
    <property type="term" value="P:DNA replication-dependent chromatin assembly"/>
    <property type="evidence" value="ECO:0000318"/>
    <property type="project" value="GO_Central"/>
</dbReference>
<dbReference type="FunFam" id="2.60.40.1490:FF:000001">
    <property type="entry name" value="Histone chaperone ASF1"/>
    <property type="match status" value="1"/>
</dbReference>
<dbReference type="Gene3D" id="2.60.40.1490">
    <property type="entry name" value="Histone chaperone ASF1-like"/>
    <property type="match status" value="1"/>
</dbReference>
<dbReference type="InterPro" id="IPR006818">
    <property type="entry name" value="ASF1-like"/>
</dbReference>
<dbReference type="InterPro" id="IPR036747">
    <property type="entry name" value="ASF1-like_sf"/>
</dbReference>
<dbReference type="PANTHER" id="PTHR12040">
    <property type="entry name" value="ANTI-SILENCING PROTEIN 1"/>
    <property type="match status" value="1"/>
</dbReference>
<dbReference type="PANTHER" id="PTHR12040:SF22">
    <property type="entry name" value="HISTONE CHAPERONE ASF1B"/>
    <property type="match status" value="1"/>
</dbReference>
<dbReference type="Pfam" id="PF04729">
    <property type="entry name" value="ASF1_hist_chap"/>
    <property type="match status" value="1"/>
</dbReference>
<dbReference type="SUPFAM" id="SSF101546">
    <property type="entry name" value="ASF1-like"/>
    <property type="match status" value="1"/>
</dbReference>
<reference key="1">
    <citation type="journal article" date="2013" name="Nature">
        <title>The zebrafish reference genome sequence and its relationship to the human genome.</title>
        <authorList>
            <person name="Howe K."/>
            <person name="Clark M.D."/>
            <person name="Torroja C.F."/>
            <person name="Torrance J."/>
            <person name="Berthelot C."/>
            <person name="Muffato M."/>
            <person name="Collins J.E."/>
            <person name="Humphray S."/>
            <person name="McLaren K."/>
            <person name="Matthews L."/>
            <person name="McLaren S."/>
            <person name="Sealy I."/>
            <person name="Caccamo M."/>
            <person name="Churcher C."/>
            <person name="Scott C."/>
            <person name="Barrett J.C."/>
            <person name="Koch R."/>
            <person name="Rauch G.J."/>
            <person name="White S."/>
            <person name="Chow W."/>
            <person name="Kilian B."/>
            <person name="Quintais L.T."/>
            <person name="Guerra-Assuncao J.A."/>
            <person name="Zhou Y."/>
            <person name="Gu Y."/>
            <person name="Yen J."/>
            <person name="Vogel J.H."/>
            <person name="Eyre T."/>
            <person name="Redmond S."/>
            <person name="Banerjee R."/>
            <person name="Chi J."/>
            <person name="Fu B."/>
            <person name="Langley E."/>
            <person name="Maguire S.F."/>
            <person name="Laird G.K."/>
            <person name="Lloyd D."/>
            <person name="Kenyon E."/>
            <person name="Donaldson S."/>
            <person name="Sehra H."/>
            <person name="Almeida-King J."/>
            <person name="Loveland J."/>
            <person name="Trevanion S."/>
            <person name="Jones M."/>
            <person name="Quail M."/>
            <person name="Willey D."/>
            <person name="Hunt A."/>
            <person name="Burton J."/>
            <person name="Sims S."/>
            <person name="McLay K."/>
            <person name="Plumb B."/>
            <person name="Davis J."/>
            <person name="Clee C."/>
            <person name="Oliver K."/>
            <person name="Clark R."/>
            <person name="Riddle C."/>
            <person name="Elliot D."/>
            <person name="Threadgold G."/>
            <person name="Harden G."/>
            <person name="Ware D."/>
            <person name="Begum S."/>
            <person name="Mortimore B."/>
            <person name="Kerry G."/>
            <person name="Heath P."/>
            <person name="Phillimore B."/>
            <person name="Tracey A."/>
            <person name="Corby N."/>
            <person name="Dunn M."/>
            <person name="Johnson C."/>
            <person name="Wood J."/>
            <person name="Clark S."/>
            <person name="Pelan S."/>
            <person name="Griffiths G."/>
            <person name="Smith M."/>
            <person name="Glithero R."/>
            <person name="Howden P."/>
            <person name="Barker N."/>
            <person name="Lloyd C."/>
            <person name="Stevens C."/>
            <person name="Harley J."/>
            <person name="Holt K."/>
            <person name="Panagiotidis G."/>
            <person name="Lovell J."/>
            <person name="Beasley H."/>
            <person name="Henderson C."/>
            <person name="Gordon D."/>
            <person name="Auger K."/>
            <person name="Wright D."/>
            <person name="Collins J."/>
            <person name="Raisen C."/>
            <person name="Dyer L."/>
            <person name="Leung K."/>
            <person name="Robertson L."/>
            <person name="Ambridge K."/>
            <person name="Leongamornlert D."/>
            <person name="McGuire S."/>
            <person name="Gilderthorp R."/>
            <person name="Griffiths C."/>
            <person name="Manthravadi D."/>
            <person name="Nichol S."/>
            <person name="Barker G."/>
            <person name="Whitehead S."/>
            <person name="Kay M."/>
            <person name="Brown J."/>
            <person name="Murnane C."/>
            <person name="Gray E."/>
            <person name="Humphries M."/>
            <person name="Sycamore N."/>
            <person name="Barker D."/>
            <person name="Saunders D."/>
            <person name="Wallis J."/>
            <person name="Babbage A."/>
            <person name="Hammond S."/>
            <person name="Mashreghi-Mohammadi M."/>
            <person name="Barr L."/>
            <person name="Martin S."/>
            <person name="Wray P."/>
            <person name="Ellington A."/>
            <person name="Matthews N."/>
            <person name="Ellwood M."/>
            <person name="Woodmansey R."/>
            <person name="Clark G."/>
            <person name="Cooper J."/>
            <person name="Tromans A."/>
            <person name="Grafham D."/>
            <person name="Skuce C."/>
            <person name="Pandian R."/>
            <person name="Andrews R."/>
            <person name="Harrison E."/>
            <person name="Kimberley A."/>
            <person name="Garnett J."/>
            <person name="Fosker N."/>
            <person name="Hall R."/>
            <person name="Garner P."/>
            <person name="Kelly D."/>
            <person name="Bird C."/>
            <person name="Palmer S."/>
            <person name="Gehring I."/>
            <person name="Berger A."/>
            <person name="Dooley C.M."/>
            <person name="Ersan-Urun Z."/>
            <person name="Eser C."/>
            <person name="Geiger H."/>
            <person name="Geisler M."/>
            <person name="Karotki L."/>
            <person name="Kirn A."/>
            <person name="Konantz J."/>
            <person name="Konantz M."/>
            <person name="Oberlander M."/>
            <person name="Rudolph-Geiger S."/>
            <person name="Teucke M."/>
            <person name="Lanz C."/>
            <person name="Raddatz G."/>
            <person name="Osoegawa K."/>
            <person name="Zhu B."/>
            <person name="Rapp A."/>
            <person name="Widaa S."/>
            <person name="Langford C."/>
            <person name="Yang F."/>
            <person name="Schuster S.C."/>
            <person name="Carter N.P."/>
            <person name="Harrow J."/>
            <person name="Ning Z."/>
            <person name="Herrero J."/>
            <person name="Searle S.M."/>
            <person name="Enright A."/>
            <person name="Geisler R."/>
            <person name="Plasterk R.H."/>
            <person name="Lee C."/>
            <person name="Westerfield M."/>
            <person name="de Jong P.J."/>
            <person name="Zon L.I."/>
            <person name="Postlethwait J.H."/>
            <person name="Nusslein-Volhard C."/>
            <person name="Hubbard T.J."/>
            <person name="Roest Crollius H."/>
            <person name="Rogers J."/>
            <person name="Stemple D.L."/>
        </authorList>
    </citation>
    <scope>NUCLEOTIDE SEQUENCE [LARGE SCALE GENOMIC DNA]</scope>
    <source>
        <strain>Tuebingen</strain>
    </source>
</reference>
<reference key="2">
    <citation type="submission" date="2004-03" db="EMBL/GenBank/DDBJ databases">
        <authorList>
            <consortium name="NIH - Zebrafish Gene Collection (ZGC) project"/>
        </authorList>
    </citation>
    <scope>NUCLEOTIDE SEQUENCE [LARGE SCALE MRNA]</scope>
    <source>
        <tissue>Kidney</tissue>
    </source>
</reference>
<evidence type="ECO:0000250" key="1"/>
<evidence type="ECO:0000305" key="2"/>
<accession>Q6NY34</accession>
<accession>B8JM31</accession>
<comment type="function">
    <text evidence="1">Histone chaperone that facilitates histone deposition and histone exchange and removal during nucleosome assembly and disassembly.</text>
</comment>
<comment type="subunit">
    <text evidence="1">Interacts with histone H3 and histone H4.</text>
</comment>
<comment type="subcellular location">
    <subcellularLocation>
        <location evidence="1">Nucleus</location>
    </subcellularLocation>
</comment>
<comment type="similarity">
    <text evidence="2">Belongs to the ASF1 family.</text>
</comment>
<keyword id="KW-0143">Chaperone</keyword>
<keyword id="KW-0156">Chromatin regulator</keyword>
<keyword id="KW-0539">Nucleus</keyword>
<keyword id="KW-1185">Reference proteome</keyword>
<keyword id="KW-0804">Transcription</keyword>
<keyword id="KW-0805">Transcription regulation</keyword>
<name>AS1BB_DANRE</name>
<sequence>MAKVQVLNVAVLDNPSPFGNPFQFEITFECMEDLPEDLEWKIIYVGSAESEEYDQILDSVLVGPVPAGRHMFVFQADAPNTGLIPESDAVGVTVVLITCTYRGQEFIRIGYYVNNEYTDPELRENPPVKPDYTQLQRNILASNPRVTRFHINWEATMDKMEDSENVDPAPNAMLPPTCMPGKAPPLGLMPDNSMDCL</sequence>
<feature type="chain" id="PRO_0000284018" description="Histone chaperone asf1b-B">
    <location>
        <begin position="1"/>
        <end position="197"/>
    </location>
</feature>
<organism>
    <name type="scientific">Danio rerio</name>
    <name type="common">Zebrafish</name>
    <name type="synonym">Brachydanio rerio</name>
    <dbReference type="NCBI Taxonomy" id="7955"/>
    <lineage>
        <taxon>Eukaryota</taxon>
        <taxon>Metazoa</taxon>
        <taxon>Chordata</taxon>
        <taxon>Craniata</taxon>
        <taxon>Vertebrata</taxon>
        <taxon>Euteleostomi</taxon>
        <taxon>Actinopterygii</taxon>
        <taxon>Neopterygii</taxon>
        <taxon>Teleostei</taxon>
        <taxon>Ostariophysi</taxon>
        <taxon>Cypriniformes</taxon>
        <taxon>Danionidae</taxon>
        <taxon>Danioninae</taxon>
        <taxon>Danio</taxon>
    </lineage>
</organism>
<proteinExistence type="evidence at transcript level"/>
<gene>
    <name type="primary">asf1bb</name>
    <name type="synonym">asb1bb</name>
    <name type="ORF">si:ch73-343l4.9</name>
    <name type="ORF">zgc:76977</name>
</gene>
<protein>
    <recommendedName>
        <fullName>Histone chaperone asf1b-B</fullName>
    </recommendedName>
    <alternativeName>
        <fullName>Anti-silencing function protein 1 homolog Bb</fullName>
    </alternativeName>
</protein>